<reference key="1">
    <citation type="journal article" date="2005" name="Proc. Natl. Acad. Sci. U.S.A.">
        <title>Whole genome sequence of Staphylococcus saprophyticus reveals the pathogenesis of uncomplicated urinary tract infection.</title>
        <authorList>
            <person name="Kuroda M."/>
            <person name="Yamashita A."/>
            <person name="Hirakawa H."/>
            <person name="Kumano M."/>
            <person name="Morikawa K."/>
            <person name="Higashide M."/>
            <person name="Maruyama A."/>
            <person name="Inose Y."/>
            <person name="Matoba K."/>
            <person name="Toh H."/>
            <person name="Kuhara S."/>
            <person name="Hattori M."/>
            <person name="Ohta T."/>
        </authorList>
    </citation>
    <scope>NUCLEOTIDE SEQUENCE [LARGE SCALE GENOMIC DNA]</scope>
    <source>
        <strain>ATCC 15305 / DSM 20229 / NCIMB 8711 / NCTC 7292 / S-41</strain>
    </source>
</reference>
<gene>
    <name evidence="1" type="primary">gatC</name>
    <name type="ordered locus">SSP0890</name>
</gene>
<accession>Q49YU5</accession>
<evidence type="ECO:0000255" key="1">
    <source>
        <dbReference type="HAMAP-Rule" id="MF_00122"/>
    </source>
</evidence>
<comment type="function">
    <text evidence="1">Allows the formation of correctly charged Asn-tRNA(Asn) or Gln-tRNA(Gln) through the transamidation of misacylated Asp-tRNA(Asn) or Glu-tRNA(Gln) in organisms which lack either or both of asparaginyl-tRNA or glutaminyl-tRNA synthetases. The reaction takes place in the presence of glutamine and ATP through an activated phospho-Asp-tRNA(Asn) or phospho-Glu-tRNA(Gln).</text>
</comment>
<comment type="catalytic activity">
    <reaction evidence="1">
        <text>L-glutamyl-tRNA(Gln) + L-glutamine + ATP + H2O = L-glutaminyl-tRNA(Gln) + L-glutamate + ADP + phosphate + H(+)</text>
        <dbReference type="Rhea" id="RHEA:17521"/>
        <dbReference type="Rhea" id="RHEA-COMP:9681"/>
        <dbReference type="Rhea" id="RHEA-COMP:9684"/>
        <dbReference type="ChEBI" id="CHEBI:15377"/>
        <dbReference type="ChEBI" id="CHEBI:15378"/>
        <dbReference type="ChEBI" id="CHEBI:29985"/>
        <dbReference type="ChEBI" id="CHEBI:30616"/>
        <dbReference type="ChEBI" id="CHEBI:43474"/>
        <dbReference type="ChEBI" id="CHEBI:58359"/>
        <dbReference type="ChEBI" id="CHEBI:78520"/>
        <dbReference type="ChEBI" id="CHEBI:78521"/>
        <dbReference type="ChEBI" id="CHEBI:456216"/>
    </reaction>
</comment>
<comment type="catalytic activity">
    <reaction evidence="1">
        <text>L-aspartyl-tRNA(Asn) + L-glutamine + ATP + H2O = L-asparaginyl-tRNA(Asn) + L-glutamate + ADP + phosphate + 2 H(+)</text>
        <dbReference type="Rhea" id="RHEA:14513"/>
        <dbReference type="Rhea" id="RHEA-COMP:9674"/>
        <dbReference type="Rhea" id="RHEA-COMP:9677"/>
        <dbReference type="ChEBI" id="CHEBI:15377"/>
        <dbReference type="ChEBI" id="CHEBI:15378"/>
        <dbReference type="ChEBI" id="CHEBI:29985"/>
        <dbReference type="ChEBI" id="CHEBI:30616"/>
        <dbReference type="ChEBI" id="CHEBI:43474"/>
        <dbReference type="ChEBI" id="CHEBI:58359"/>
        <dbReference type="ChEBI" id="CHEBI:78515"/>
        <dbReference type="ChEBI" id="CHEBI:78516"/>
        <dbReference type="ChEBI" id="CHEBI:456216"/>
    </reaction>
</comment>
<comment type="subunit">
    <text evidence="1">Heterotrimer of A, B and C subunits.</text>
</comment>
<comment type="similarity">
    <text evidence="1">Belongs to the GatC family.</text>
</comment>
<sequence>MAKVTREEVEHIANLARLQITEDETTEMQNTLESILNFANQIDTADTSEIEPTYHVLDLQNVLREDKAIEGIPQELALKNAKVTEDGQFKVPSIMNEEDA</sequence>
<keyword id="KW-0067">ATP-binding</keyword>
<keyword id="KW-0436">Ligase</keyword>
<keyword id="KW-0547">Nucleotide-binding</keyword>
<keyword id="KW-0648">Protein biosynthesis</keyword>
<keyword id="KW-1185">Reference proteome</keyword>
<proteinExistence type="inferred from homology"/>
<feature type="chain" id="PRO_1000016219" description="Aspartyl/glutamyl-tRNA(Asn/Gln) amidotransferase subunit C">
    <location>
        <begin position="1"/>
        <end position="100"/>
    </location>
</feature>
<organism>
    <name type="scientific">Staphylococcus saprophyticus subsp. saprophyticus (strain ATCC 15305 / DSM 20229 / NCIMB 8711 / NCTC 7292 / S-41)</name>
    <dbReference type="NCBI Taxonomy" id="342451"/>
    <lineage>
        <taxon>Bacteria</taxon>
        <taxon>Bacillati</taxon>
        <taxon>Bacillota</taxon>
        <taxon>Bacilli</taxon>
        <taxon>Bacillales</taxon>
        <taxon>Staphylococcaceae</taxon>
        <taxon>Staphylococcus</taxon>
    </lineage>
</organism>
<name>GATC_STAS1</name>
<dbReference type="EC" id="6.3.5.-" evidence="1"/>
<dbReference type="EMBL" id="AP008934">
    <property type="protein sequence ID" value="BAE18035.1"/>
    <property type="molecule type" value="Genomic_DNA"/>
</dbReference>
<dbReference type="RefSeq" id="WP_011302767.1">
    <property type="nucleotide sequence ID" value="NC_007350.1"/>
</dbReference>
<dbReference type="SMR" id="Q49YU5"/>
<dbReference type="GeneID" id="3617086"/>
<dbReference type="KEGG" id="ssp:SSP0890"/>
<dbReference type="PATRIC" id="fig|342451.11.peg.889"/>
<dbReference type="eggNOG" id="COG0721">
    <property type="taxonomic scope" value="Bacteria"/>
</dbReference>
<dbReference type="HOGENOM" id="CLU_105899_6_1_9"/>
<dbReference type="OrthoDB" id="9813938at2"/>
<dbReference type="Proteomes" id="UP000006371">
    <property type="component" value="Chromosome"/>
</dbReference>
<dbReference type="GO" id="GO:0050566">
    <property type="term" value="F:asparaginyl-tRNA synthase (glutamine-hydrolyzing) activity"/>
    <property type="evidence" value="ECO:0007669"/>
    <property type="project" value="RHEA"/>
</dbReference>
<dbReference type="GO" id="GO:0005524">
    <property type="term" value="F:ATP binding"/>
    <property type="evidence" value="ECO:0007669"/>
    <property type="project" value="UniProtKB-KW"/>
</dbReference>
<dbReference type="GO" id="GO:0050567">
    <property type="term" value="F:glutaminyl-tRNA synthase (glutamine-hydrolyzing) activity"/>
    <property type="evidence" value="ECO:0007669"/>
    <property type="project" value="UniProtKB-UniRule"/>
</dbReference>
<dbReference type="GO" id="GO:0070681">
    <property type="term" value="P:glutaminyl-tRNAGln biosynthesis via transamidation"/>
    <property type="evidence" value="ECO:0007669"/>
    <property type="project" value="TreeGrafter"/>
</dbReference>
<dbReference type="GO" id="GO:0006450">
    <property type="term" value="P:regulation of translational fidelity"/>
    <property type="evidence" value="ECO:0007669"/>
    <property type="project" value="InterPro"/>
</dbReference>
<dbReference type="GO" id="GO:0006412">
    <property type="term" value="P:translation"/>
    <property type="evidence" value="ECO:0007669"/>
    <property type="project" value="UniProtKB-UniRule"/>
</dbReference>
<dbReference type="Gene3D" id="1.10.20.60">
    <property type="entry name" value="Glu-tRNAGln amidotransferase C subunit, N-terminal domain"/>
    <property type="match status" value="1"/>
</dbReference>
<dbReference type="HAMAP" id="MF_00122">
    <property type="entry name" value="GatC"/>
    <property type="match status" value="1"/>
</dbReference>
<dbReference type="InterPro" id="IPR036113">
    <property type="entry name" value="Asp/Glu-ADT_sf_sub_c"/>
</dbReference>
<dbReference type="InterPro" id="IPR003837">
    <property type="entry name" value="GatC"/>
</dbReference>
<dbReference type="NCBIfam" id="TIGR00135">
    <property type="entry name" value="gatC"/>
    <property type="match status" value="1"/>
</dbReference>
<dbReference type="PANTHER" id="PTHR15004">
    <property type="entry name" value="GLUTAMYL-TRNA(GLN) AMIDOTRANSFERASE SUBUNIT C, MITOCHONDRIAL"/>
    <property type="match status" value="1"/>
</dbReference>
<dbReference type="PANTHER" id="PTHR15004:SF0">
    <property type="entry name" value="GLUTAMYL-TRNA(GLN) AMIDOTRANSFERASE SUBUNIT C, MITOCHONDRIAL"/>
    <property type="match status" value="1"/>
</dbReference>
<dbReference type="Pfam" id="PF02686">
    <property type="entry name" value="GatC"/>
    <property type="match status" value="1"/>
</dbReference>
<dbReference type="SUPFAM" id="SSF141000">
    <property type="entry name" value="Glu-tRNAGln amidotransferase C subunit"/>
    <property type="match status" value="1"/>
</dbReference>
<protein>
    <recommendedName>
        <fullName evidence="1">Aspartyl/glutamyl-tRNA(Asn/Gln) amidotransferase subunit C</fullName>
        <shortName evidence="1">Asp/Glu-ADT subunit C</shortName>
        <ecNumber evidence="1">6.3.5.-</ecNumber>
    </recommendedName>
</protein>